<accession>Q9LW31</accession>
<accession>O82411</accession>
<accession>Q700C8</accession>
<accession>Q9SAT8</accession>
<dbReference type="EMBL" id="AF016264">
    <property type="protein sequence ID" value="AAC35246.1"/>
    <property type="status" value="ALT_INIT"/>
    <property type="molecule type" value="Genomic_DNA"/>
</dbReference>
<dbReference type="EMBL" id="AF016265">
    <property type="protein sequence ID" value="AAC35247.1"/>
    <property type="status" value="ALT_INIT"/>
    <property type="molecule type" value="mRNA"/>
</dbReference>
<dbReference type="EMBL" id="AB016889">
    <property type="protein sequence ID" value="BAB01226.1"/>
    <property type="status" value="ALT_SEQ"/>
    <property type="molecule type" value="Genomic_DNA"/>
</dbReference>
<dbReference type="EMBL" id="CP002686">
    <property type="protein sequence ID" value="AEE77216.1"/>
    <property type="molecule type" value="Genomic_DNA"/>
</dbReference>
<dbReference type="EMBL" id="AJ630497">
    <property type="protein sequence ID" value="CAG25870.1"/>
    <property type="molecule type" value="mRNA"/>
</dbReference>
<dbReference type="EMBL" id="AY568669">
    <property type="protein sequence ID" value="AAS79559.1"/>
    <property type="molecule type" value="mRNA"/>
</dbReference>
<dbReference type="RefSeq" id="NP_566799.1">
    <property type="nucleotide sequence ID" value="NM_113591.4"/>
</dbReference>
<dbReference type="PDB" id="6J9B">
    <property type="method" value="X-ray"/>
    <property type="resolution" value="1.90 A"/>
    <property type="chains" value="A/D=89-201"/>
</dbReference>
<dbReference type="PDBsum" id="6J9B"/>
<dbReference type="SMR" id="Q9LW31"/>
<dbReference type="BioGRID" id="7623">
    <property type="interactions" value="2"/>
</dbReference>
<dbReference type="FunCoup" id="Q9LW31">
    <property type="interactions" value="107"/>
</dbReference>
<dbReference type="STRING" id="3702.Q9LW31"/>
<dbReference type="iPTMnet" id="Q9LW31"/>
<dbReference type="PaxDb" id="3702-AT3G26790.1"/>
<dbReference type="ProteomicsDB" id="230553"/>
<dbReference type="EnsemblPlants" id="AT3G26790.1">
    <property type="protein sequence ID" value="AT3G26790.1"/>
    <property type="gene ID" value="AT3G26790"/>
</dbReference>
<dbReference type="GeneID" id="822293"/>
<dbReference type="Gramene" id="AT3G26790.1">
    <property type="protein sequence ID" value="AT3G26790.1"/>
    <property type="gene ID" value="AT3G26790"/>
</dbReference>
<dbReference type="KEGG" id="ath:AT3G26790"/>
<dbReference type="Araport" id="AT3G26790"/>
<dbReference type="TAIR" id="AT3G26790">
    <property type="gene designation" value="FUS3"/>
</dbReference>
<dbReference type="eggNOG" id="ENOG502QPW6">
    <property type="taxonomic scope" value="Eukaryota"/>
</dbReference>
<dbReference type="HOGENOM" id="CLU_084617_0_0_1"/>
<dbReference type="InParanoid" id="Q9LW31"/>
<dbReference type="OMA" id="PAMDNEM"/>
<dbReference type="PhylomeDB" id="Q9LW31"/>
<dbReference type="PRO" id="PR:Q9LW31"/>
<dbReference type="Proteomes" id="UP000006548">
    <property type="component" value="Chromosome 3"/>
</dbReference>
<dbReference type="ExpressionAtlas" id="Q9LW31">
    <property type="expression patterns" value="baseline and differential"/>
</dbReference>
<dbReference type="GO" id="GO:0005634">
    <property type="term" value="C:nucleus"/>
    <property type="evidence" value="ECO:0007669"/>
    <property type="project" value="UniProtKB-SubCell"/>
</dbReference>
<dbReference type="GO" id="GO:0003677">
    <property type="term" value="F:DNA binding"/>
    <property type="evidence" value="ECO:0000314"/>
    <property type="project" value="TAIR"/>
</dbReference>
<dbReference type="GO" id="GO:0003700">
    <property type="term" value="F:DNA-binding transcription factor activity"/>
    <property type="evidence" value="ECO:0000250"/>
    <property type="project" value="TAIR"/>
</dbReference>
<dbReference type="GO" id="GO:0019900">
    <property type="term" value="F:kinase binding"/>
    <property type="evidence" value="ECO:0000353"/>
    <property type="project" value="UniProtKB"/>
</dbReference>
<dbReference type="GO" id="GO:0009793">
    <property type="term" value="P:embryo development ending in seed dormancy"/>
    <property type="evidence" value="ECO:0000316"/>
    <property type="project" value="TAIR"/>
</dbReference>
<dbReference type="GO" id="GO:0010373">
    <property type="term" value="P:negative regulation of gibberellin biosynthetic process"/>
    <property type="evidence" value="ECO:0000315"/>
    <property type="project" value="UniProtKB"/>
</dbReference>
<dbReference type="GO" id="GO:0099402">
    <property type="term" value="P:plant organ development"/>
    <property type="evidence" value="ECO:0000315"/>
    <property type="project" value="UniProtKB"/>
</dbReference>
<dbReference type="GO" id="GO:0010116">
    <property type="term" value="P:positive regulation of abscisic acid biosynthetic process"/>
    <property type="evidence" value="ECO:0000315"/>
    <property type="project" value="TAIR"/>
</dbReference>
<dbReference type="GO" id="GO:0009789">
    <property type="term" value="P:positive regulation of abscisic acid-activated signaling pathway"/>
    <property type="evidence" value="ECO:0000315"/>
    <property type="project" value="UniProtKB"/>
</dbReference>
<dbReference type="GO" id="GO:0008284">
    <property type="term" value="P:positive regulation of cell population proliferation"/>
    <property type="evidence" value="ECO:0000314"/>
    <property type="project" value="UniProtKB"/>
</dbReference>
<dbReference type="GO" id="GO:0045995">
    <property type="term" value="P:regulation of embryonic development"/>
    <property type="evidence" value="ECO:0000315"/>
    <property type="project" value="UniProtKB"/>
</dbReference>
<dbReference type="GO" id="GO:0009733">
    <property type="term" value="P:response to auxin"/>
    <property type="evidence" value="ECO:0000270"/>
    <property type="project" value="TAIR"/>
</dbReference>
<dbReference type="GO" id="GO:0010262">
    <property type="term" value="P:somatic embryogenesis"/>
    <property type="evidence" value="ECO:0000315"/>
    <property type="project" value="TAIR"/>
</dbReference>
<dbReference type="GO" id="GO:0010228">
    <property type="term" value="P:vegetative to reproductive phase transition of meristem"/>
    <property type="evidence" value="ECO:0000315"/>
    <property type="project" value="UniProtKB"/>
</dbReference>
<dbReference type="CDD" id="cd10017">
    <property type="entry name" value="B3_DNA"/>
    <property type="match status" value="1"/>
</dbReference>
<dbReference type="FunFam" id="2.40.330.10:FF:000003">
    <property type="entry name" value="B3 domain-containing transcription factor FUS3"/>
    <property type="match status" value="1"/>
</dbReference>
<dbReference type="Gene3D" id="2.40.330.10">
    <property type="entry name" value="DNA-binding pseudobarrel domain"/>
    <property type="match status" value="1"/>
</dbReference>
<dbReference type="InterPro" id="IPR003340">
    <property type="entry name" value="B3_DNA-bd"/>
</dbReference>
<dbReference type="InterPro" id="IPR015300">
    <property type="entry name" value="DNA-bd_pseudobarrel_sf"/>
</dbReference>
<dbReference type="InterPro" id="IPR044800">
    <property type="entry name" value="LEC2-like"/>
</dbReference>
<dbReference type="PANTHER" id="PTHR31140">
    <property type="entry name" value="B3 DOMAIN-CONTAINING TRANSCRIPTION FACTOR ABI3"/>
    <property type="match status" value="1"/>
</dbReference>
<dbReference type="PANTHER" id="PTHR31140:SF73">
    <property type="entry name" value="B3 DOMAIN-CONTAINING TRANSCRIPTION FACTOR FUS3"/>
    <property type="match status" value="1"/>
</dbReference>
<dbReference type="Pfam" id="PF02362">
    <property type="entry name" value="B3"/>
    <property type="match status" value="1"/>
</dbReference>
<dbReference type="SMART" id="SM01019">
    <property type="entry name" value="B3"/>
    <property type="match status" value="1"/>
</dbReference>
<dbReference type="SUPFAM" id="SSF101936">
    <property type="entry name" value="DNA-binding pseudobarrel domain"/>
    <property type="match status" value="1"/>
</dbReference>
<dbReference type="PROSITE" id="PS50863">
    <property type="entry name" value="B3"/>
    <property type="match status" value="1"/>
</dbReference>
<gene>
    <name type="primary">FUS3</name>
    <name type="ordered locus">At3g26790</name>
    <name type="ORF">MDJ14.4</name>
</gene>
<feature type="chain" id="PRO_0000375089" description="B3 domain-containing transcription factor FUS3">
    <location>
        <begin position="1"/>
        <end position="313"/>
    </location>
</feature>
<feature type="DNA-binding region" description="TF-B3" evidence="1">
    <location>
        <begin position="92"/>
        <end position="194"/>
    </location>
</feature>
<feature type="mutagenesis site" description="Increased seed abortion and delayed embryo development; when associated with A-56 and A-57." evidence="7">
    <original>S</original>
    <variation>A</variation>
    <location>
        <position position="55"/>
    </location>
</feature>
<feature type="mutagenesis site" description="Delay in flowering; when associated with D-56 and D-57." evidence="7">
    <original>S</original>
    <variation>D</variation>
    <location>
        <position position="55"/>
    </location>
</feature>
<feature type="mutagenesis site" description="Increased seed abortion and delayed embryo development; when associated with A-55 and A-57." evidence="7">
    <original>S</original>
    <variation>A</variation>
    <location>
        <position position="56"/>
    </location>
</feature>
<feature type="mutagenesis site" description="Delay in flowering; when associated with D-55 and D-57." evidence="7">
    <original>S</original>
    <variation>D</variation>
    <location>
        <position position="56"/>
    </location>
</feature>
<feature type="mutagenesis site" description="Increased seed abortion and delayed embryo development; when associated with A-55 and A-56." evidence="7">
    <original>S</original>
    <variation>A</variation>
    <location>
        <position position="57"/>
    </location>
</feature>
<feature type="mutagenesis site" description="Delay in flowering; when associated with D-55 and D-56." evidence="7">
    <original>S</original>
    <variation>D</variation>
    <location>
        <position position="57"/>
    </location>
</feature>
<feature type="sequence conflict" description="In Ref. 1; AAC35246." evidence="9" ref="1">
    <original>K</original>
    <variation>N</variation>
    <location>
        <position position="10"/>
    </location>
</feature>
<feature type="sequence conflict" description="In Ref. 1; AAC35246." evidence="9" ref="1">
    <original>P</original>
    <variation>T</variation>
    <location>
        <position position="75"/>
    </location>
</feature>
<feature type="sequence conflict" description="In Ref. 1; AAC35246." evidence="9" ref="1">
    <original>E</original>
    <variation>G</variation>
    <location>
        <position position="217"/>
    </location>
</feature>
<feature type="sequence conflict" description="In Ref. 4; CAG25870/AAS79559." evidence="9" ref="4">
    <location>
        <begin position="239"/>
        <end position="241"/>
    </location>
</feature>
<feature type="sequence conflict" description="In Ref. 1; AAC35246." evidence="9" ref="1">
    <location>
        <begin position="244"/>
        <end position="245"/>
    </location>
</feature>
<feature type="strand" evidence="10">
    <location>
        <begin position="90"/>
        <end position="95"/>
    </location>
</feature>
<feature type="helix" evidence="10">
    <location>
        <begin position="98"/>
        <end position="101"/>
    </location>
</feature>
<feature type="helix" evidence="10">
    <location>
        <begin position="111"/>
        <end position="117"/>
    </location>
</feature>
<feature type="strand" evidence="10">
    <location>
        <begin position="127"/>
        <end position="137"/>
    </location>
</feature>
<feature type="strand" evidence="10">
    <location>
        <begin position="139"/>
        <end position="149"/>
    </location>
</feature>
<feature type="strand" evidence="10">
    <location>
        <begin position="152"/>
        <end position="159"/>
    </location>
</feature>
<feature type="helix" evidence="10">
    <location>
        <begin position="161"/>
        <end position="167"/>
    </location>
</feature>
<feature type="strand" evidence="10">
    <location>
        <begin position="174"/>
        <end position="179"/>
    </location>
</feature>
<feature type="turn" evidence="10">
    <location>
        <begin position="181"/>
        <end position="183"/>
    </location>
</feature>
<feature type="strand" evidence="10">
    <location>
        <begin position="186"/>
        <end position="191"/>
    </location>
</feature>
<protein>
    <recommendedName>
        <fullName>B3 domain-containing transcription factor FUS3</fullName>
    </recommendedName>
    <alternativeName>
        <fullName>Protein FUSCA3</fullName>
    </alternativeName>
</protein>
<proteinExistence type="evidence at protein level"/>
<comment type="function">
    <text evidence="3 4 5 6">Transcription regulator involved in gene regulation during late embryogenesis. Its expression to the epidermis is sufficient to control foliar organ identity by regulating positively the synthesis abscisic acid (ABA) and negatively gibberellin production. Negatively regulates TTG1 in the embryo. Positively regulates the abundance of the ABI3 protein in the seed. Cooperates with KIN10 to regulate developmental phase transitions and lateral organ development and act both as positive regulators of abscisic acid (ABA) signaling during germination (PubMed:22026387, PubMed:22902692).</text>
</comment>
<comment type="activity regulation">
    <text evidence="7">Phosphorylation by KIN10 is required to positively regulates embryogenesis, seed yield, and plant growth at high temperature.</text>
</comment>
<comment type="subunit">
    <text evidence="5">Interacts with KIN10.</text>
</comment>
<comment type="subcellular location">
    <subcellularLocation>
        <location evidence="9">Nucleus</location>
    </subcellularLocation>
</comment>
<comment type="tissue specificity">
    <text evidence="5">Expressed in cotyledons and hypocotyls.</text>
</comment>
<comment type="developmental stage">
    <text evidence="3 5 8">Expressed in developing embryo. At globular stage, expressed in all cells of the embryo proper. At heart stage, preferentially expressed in the protodermal tissue. In mature embryo, expressed in the provascular tissue, root cap and mature epidermis. Expressed in the aleurone layer in mature seed. Expressed in leaf primordia and shoot apical meristem (PubMed:22026387).</text>
</comment>
<comment type="PTM">
    <text evidence="5">Phosphorylation by KIN10 increases its stability. Phosphorylated at one or more of the Ser-55, Ser-56 and/or Ser-57 residues.</text>
</comment>
<comment type="disruption phenotype">
    <text evidence="2">Accumulation of anthocyanins in embryo. Presence of trichomes on cotyledons. Unusual pattern of storage product accumulation in embryos and cotyledons.</text>
</comment>
<comment type="sequence caution" evidence="9">
    <conflict type="erroneous initiation">
        <sequence resource="EMBL-CDS" id="AAC35246"/>
    </conflict>
</comment>
<comment type="sequence caution" evidence="9">
    <conflict type="erroneous initiation">
        <sequence resource="EMBL-CDS" id="AAC35247"/>
    </conflict>
</comment>
<comment type="sequence caution" evidence="9">
    <conflict type="erroneous gene model prediction">
        <sequence resource="EMBL-CDS" id="BAB01226"/>
    </conflict>
</comment>
<name>FUS3_ARATH</name>
<reference key="1">
    <citation type="journal article" date="1998" name="Plant J.">
        <title>FUSCA3 encodes a protein with a conserved VP1/AB13-like B3 domain which is of functional importance for the regulation of seed maturation in Arabidopsis thaliana.</title>
        <authorList>
            <person name="Luerssen H."/>
            <person name="Kirik V."/>
            <person name="Herrmann P."/>
            <person name="Misera S."/>
        </authorList>
    </citation>
    <scope>NUCLEOTIDE SEQUENCE [GENOMIC DNA / MRNA]</scope>
    <scope>DEVELOPMENTAL STAGE</scope>
    <source>
        <strain>cv. Columbia</strain>
        <tissue>Silique</tissue>
    </source>
</reference>
<reference key="2">
    <citation type="journal article" date="2000" name="DNA Res.">
        <title>Structural analysis of Arabidopsis thaliana chromosome 3. I. Sequence features of the regions of 4,504,864 bp covered by sixty P1 and TAC clones.</title>
        <authorList>
            <person name="Sato S."/>
            <person name="Nakamura Y."/>
            <person name="Kaneko T."/>
            <person name="Katoh T."/>
            <person name="Asamizu E."/>
            <person name="Tabata S."/>
        </authorList>
    </citation>
    <scope>NUCLEOTIDE SEQUENCE [LARGE SCALE GENOMIC DNA]</scope>
    <source>
        <strain>cv. Columbia</strain>
    </source>
</reference>
<reference key="3">
    <citation type="journal article" date="2017" name="Plant J.">
        <title>Araport11: a complete reannotation of the Arabidopsis thaliana reference genome.</title>
        <authorList>
            <person name="Cheng C.Y."/>
            <person name="Krishnakumar V."/>
            <person name="Chan A.P."/>
            <person name="Thibaud-Nissen F."/>
            <person name="Schobel S."/>
            <person name="Town C.D."/>
        </authorList>
    </citation>
    <scope>GENOME REANNOTATION</scope>
    <source>
        <strain>cv. Columbia</strain>
    </source>
</reference>
<reference key="4">
    <citation type="journal article" date="2004" name="Plant Physiol.">
        <title>Genome-wide ORFeome cloning and analysis of Arabidopsis transcription factor genes.</title>
        <authorList>
            <person name="Gong W."/>
            <person name="Shen Y.-P."/>
            <person name="Ma L.-G."/>
            <person name="Pan Y."/>
            <person name="Du Y.-L."/>
            <person name="Wang D.-H."/>
            <person name="Yang J.-Y."/>
            <person name="Hu L.-D."/>
            <person name="Liu X.-F."/>
            <person name="Dong C.-X."/>
            <person name="Ma L."/>
            <person name="Chen Y.-H."/>
            <person name="Yang X.-Y."/>
            <person name="Gao Y."/>
            <person name="Zhu D."/>
            <person name="Tan X."/>
            <person name="Mu J.-Y."/>
            <person name="Zhang D.-B."/>
            <person name="Liu Y.-L."/>
            <person name="Dinesh-Kumar S.P."/>
            <person name="Li Y."/>
            <person name="Wang X.-P."/>
            <person name="Gu H.-Y."/>
            <person name="Qu L.-J."/>
            <person name="Bai S.-N."/>
            <person name="Lu Y.-T."/>
            <person name="Li J.-Y."/>
            <person name="Zhao J.-D."/>
            <person name="Zuo J."/>
            <person name="Huang H."/>
            <person name="Deng X.-W."/>
            <person name="Zhu Y.-X."/>
        </authorList>
    </citation>
    <scope>NUCLEOTIDE SEQUENCE [LARGE SCALE MRNA]</scope>
    <source>
        <strain>cv. Columbia</strain>
    </source>
</reference>
<reference key="5">
    <citation type="journal article" date="1994" name="Plant Cell">
        <title>fusca3: a heterochronic mutation affecting late embryo development in Arabidopsis.</title>
        <authorList>
            <person name="Keith K."/>
            <person name="Kraml M."/>
            <person name="Dengler N.G."/>
            <person name="McCourt P."/>
        </authorList>
    </citation>
    <scope>DISRUPTION PHENOTYPE</scope>
</reference>
<reference key="6">
    <citation type="journal article" date="2004" name="Dev. Cell">
        <title>The transcription factor FUSCA3 controls developmental timing in Arabidopsis through the hormones gibberellin and abscisic acid.</title>
        <authorList>
            <person name="Gazzarrini S."/>
            <person name="Tsuchiya Y."/>
            <person name="Lumba S."/>
            <person name="Okamoto M."/>
            <person name="McCourt P."/>
        </authorList>
    </citation>
    <scope>FUNCTION</scope>
</reference>
<reference key="7">
    <citation type="journal article" date="2004" name="Plant J.">
        <title>The FUS3 transcription factor functions through the epidermal regulator TTG1 during embryogenesis in Arabidopsis.</title>
        <authorList>
            <person name="Tsuchiya Y."/>
            <person name="Nambara E."/>
            <person name="Naito S."/>
            <person name="McCourt P."/>
        </authorList>
    </citation>
    <scope>FUNCTION</scope>
    <scope>DEVELOPMENTAL STAGE</scope>
</reference>
<reference key="8">
    <citation type="journal article" date="2008" name="Trends Plant Sci.">
        <title>The plant B3 superfamily.</title>
        <authorList>
            <person name="Swaminathan K."/>
            <person name="Peterson K."/>
            <person name="Jack T."/>
        </authorList>
    </citation>
    <scope>GENE FAMILY</scope>
</reference>
<reference key="9">
    <citation type="journal article" date="2012" name="Plant J.">
        <title>AKIN10 and FUSCA3 interact to control lateral organ development and phase transitions in Arabidopsis.</title>
        <authorList>
            <person name="Tsai A.Y."/>
            <person name="Gazzarrini S."/>
        </authorList>
    </citation>
    <scope>INTERACTION WITH KIN10</scope>
    <scope>PHOSPHORYLATION</scope>
    <scope>FUNCTION</scope>
    <scope>TISSUE SPECIFICITY</scope>
    <scope>DEVELOPMENTAL STAGE</scope>
</reference>
<reference key="10">
    <citation type="journal article" date="2012" name="Plant Signal. Behav.">
        <title>Overlapping and distinct roles of AKIN10 and FUSCA3 in ABA and sugar signaling during seed germination.</title>
        <authorList>
            <person name="Tsai A.Y."/>
            <person name="Gazzarrini S."/>
        </authorList>
    </citation>
    <scope>FUNCTION</scope>
</reference>
<reference key="11">
    <citation type="journal article" date="2017" name="J. Exp. Bot.">
        <title>SnRK1 phosphorylation of FUSCA3 positively regulates embryogenesis, seed yield, and plant growth at high temperature in Arabidopsis.</title>
        <authorList>
            <person name="Chan A."/>
            <person name="Carianopol C."/>
            <person name="Tsai A.Y."/>
            <person name="Varathanajah K."/>
            <person name="Chiu R.S."/>
            <person name="Gazzarrini S."/>
        </authorList>
    </citation>
    <scope>MUTAGENESIS OF SER-55; SER-56 AND SER-57</scope>
    <scope>ACTIVITY REGULATION</scope>
</reference>
<reference key="12">
    <citation type="journal article" date="2017" name="J. Exp. Bot.">
        <title>Corrigendum: SnRK1 phosphorylation of FUSCA3 positively regulates embryogenesis, seed yield, and plant growth at high temperature in Arabidopsis.</title>
        <authorList>
            <person name="Chan A."/>
            <person name="Carianopol C."/>
            <person name="Tsai A.Y."/>
            <person name="Varatharajah K."/>
            <person name="Chiu R.S."/>
            <person name="Gazzarrini S."/>
        </authorList>
    </citation>
    <scope>ERRATUM OF PUBMED:28922765</scope>
</reference>
<organism>
    <name type="scientific">Arabidopsis thaliana</name>
    <name type="common">Mouse-ear cress</name>
    <dbReference type="NCBI Taxonomy" id="3702"/>
    <lineage>
        <taxon>Eukaryota</taxon>
        <taxon>Viridiplantae</taxon>
        <taxon>Streptophyta</taxon>
        <taxon>Embryophyta</taxon>
        <taxon>Tracheophyta</taxon>
        <taxon>Spermatophyta</taxon>
        <taxon>Magnoliopsida</taxon>
        <taxon>eudicotyledons</taxon>
        <taxon>Gunneridae</taxon>
        <taxon>Pentapetalae</taxon>
        <taxon>rosids</taxon>
        <taxon>malvids</taxon>
        <taxon>Brassicales</taxon>
        <taxon>Brassicaceae</taxon>
        <taxon>Camelineae</taxon>
        <taxon>Arabidopsis</taxon>
    </lineage>
</organism>
<evidence type="ECO:0000255" key="1">
    <source>
        <dbReference type="PROSITE-ProRule" id="PRU00326"/>
    </source>
</evidence>
<evidence type="ECO:0000269" key="2">
    <source>
    </source>
</evidence>
<evidence type="ECO:0000269" key="3">
    <source>
    </source>
</evidence>
<evidence type="ECO:0000269" key="4">
    <source>
    </source>
</evidence>
<evidence type="ECO:0000269" key="5">
    <source>
    </source>
</evidence>
<evidence type="ECO:0000269" key="6">
    <source>
    </source>
</evidence>
<evidence type="ECO:0000269" key="7">
    <source>
    </source>
</evidence>
<evidence type="ECO:0000269" key="8">
    <source>
    </source>
</evidence>
<evidence type="ECO:0000305" key="9"/>
<evidence type="ECO:0007829" key="10">
    <source>
        <dbReference type="PDB" id="6J9B"/>
    </source>
</evidence>
<sequence>MMVDENVETKASTLVASVDHGFGSGSGHDHHGLSASVPLLGVNWKKRRMPRQRRSSSSFNLLSFPPPMPPISHVPTPLPARKIDPRKLRFLFQKELKNSDVSSLRRMILPKKAAEAHLPALECKEGIPIRMEDLDGFHVWTFKYRYWPNNNSRMYVLENTGDFVNAHGLQLGDFIMVYQDLYSNNYVIQARKASEEEEVDVINLEEDDVYTNLTRIENTVVNDLLLQDFNHHNNNNNNNSNSNSNKCSYYYPVIDDVTTNTESFVYDTTALTSNDTPLDFLGGHTTTTNNYYSKFGTFDGLGSVENISLDDFY</sequence>
<keyword id="KW-0002">3D-structure</keyword>
<keyword id="KW-0238">DNA-binding</keyword>
<keyword id="KW-0539">Nucleus</keyword>
<keyword id="KW-1185">Reference proteome</keyword>
<keyword id="KW-0804">Transcription</keyword>
<keyword id="KW-0805">Transcription regulation</keyword>